<reference key="1">
    <citation type="journal article" date="1997" name="Nature">
        <title>The complete genome sequence of the hyperthermophilic, sulphate-reducing archaeon Archaeoglobus fulgidus.</title>
        <authorList>
            <person name="Klenk H.-P."/>
            <person name="Clayton R.A."/>
            <person name="Tomb J.-F."/>
            <person name="White O."/>
            <person name="Nelson K.E."/>
            <person name="Ketchum K.A."/>
            <person name="Dodson R.J."/>
            <person name="Gwinn M.L."/>
            <person name="Hickey E.K."/>
            <person name="Peterson J.D."/>
            <person name="Richardson D.L."/>
            <person name="Kerlavage A.R."/>
            <person name="Graham D.E."/>
            <person name="Kyrpides N.C."/>
            <person name="Fleischmann R.D."/>
            <person name="Quackenbush J."/>
            <person name="Lee N.H."/>
            <person name="Sutton G.G."/>
            <person name="Gill S.R."/>
            <person name="Kirkness E.F."/>
            <person name="Dougherty B.A."/>
            <person name="McKenney K."/>
            <person name="Adams M.D."/>
            <person name="Loftus B.J."/>
            <person name="Peterson S.N."/>
            <person name="Reich C.I."/>
            <person name="McNeil L.K."/>
            <person name="Badger J.H."/>
            <person name="Glodek A."/>
            <person name="Zhou L."/>
            <person name="Overbeek R."/>
            <person name="Gocayne J.D."/>
            <person name="Weidman J.F."/>
            <person name="McDonald L.A."/>
            <person name="Utterback T.R."/>
            <person name="Cotton M.D."/>
            <person name="Spriggs T."/>
            <person name="Artiach P."/>
            <person name="Kaine B.P."/>
            <person name="Sykes S.M."/>
            <person name="Sadow P.W."/>
            <person name="D'Andrea K.P."/>
            <person name="Bowman C."/>
            <person name="Fujii C."/>
            <person name="Garland S.A."/>
            <person name="Mason T.M."/>
            <person name="Olsen G.J."/>
            <person name="Fraser C.M."/>
            <person name="Smith H.O."/>
            <person name="Woese C.R."/>
            <person name="Venter J.C."/>
        </authorList>
    </citation>
    <scope>NUCLEOTIDE SEQUENCE [LARGE SCALE GENOMIC DNA]</scope>
    <source>
        <strain>ATCC 49558 / DSM 4304 / JCM 9628 / NBRC 100126 / VC-16</strain>
    </source>
</reference>
<sequence length="419" mass="45872">MFSTSDGILTVEGVKVTEIVRETGTPVYVTSRALLERNLEAYKKAFSNEGLLYAVKANNNLALMRIIASHGFGADVFSDGELYLASLAGFRKDMVLFNGNSKSRKEIEMGVTAGVKFSVDSLDELRTISKIAKEVGKEVEIAFRVNPDVDPKTHPKIATGLRESKFGIPHEMVREAYEMALKLDGVVPVGIHCHIGSQILDLSPFVHALNKVMDIAVDIEKLGVELSFVDMGGGLGIDYEGKGAPTPKDLASAILPEFEGRKADLTSDPQLWLEPGRSIVGNTTVLITRVNAVKKGYKNFVAVDAGFNVLIRPAMYGSYHRVAVANKMDAEPEEVYTVVGPICESGDVLARDRKLPKVEVGDLIAVFDAGAYGFVMSSQYNGRPRCAEVLVSGDRWDVIREKESYGDLIEKQRLPEWLL</sequence>
<dbReference type="EC" id="4.1.1.20" evidence="2"/>
<dbReference type="EMBL" id="AE000782">
    <property type="protein sequence ID" value="AAB90438.1"/>
    <property type="molecule type" value="Genomic_DNA"/>
</dbReference>
<dbReference type="PIR" id="H69349">
    <property type="entry name" value="H69349"/>
</dbReference>
<dbReference type="RefSeq" id="WP_010878303.1">
    <property type="nucleotide sequence ID" value="NC_000917.1"/>
</dbReference>
<dbReference type="SMR" id="O29458"/>
<dbReference type="STRING" id="224325.AF_0800"/>
<dbReference type="PaxDb" id="224325-AF_0800"/>
<dbReference type="EnsemblBacteria" id="AAB90438">
    <property type="protein sequence ID" value="AAB90438"/>
    <property type="gene ID" value="AF_0800"/>
</dbReference>
<dbReference type="GeneID" id="24794398"/>
<dbReference type="KEGG" id="afu:AF_0800"/>
<dbReference type="eggNOG" id="arCOG02268">
    <property type="taxonomic scope" value="Archaea"/>
</dbReference>
<dbReference type="HOGENOM" id="CLU_026444_0_2_2"/>
<dbReference type="OrthoDB" id="18565at2157"/>
<dbReference type="PhylomeDB" id="O29458"/>
<dbReference type="UniPathway" id="UPA00034">
    <property type="reaction ID" value="UER00027"/>
</dbReference>
<dbReference type="Proteomes" id="UP000002199">
    <property type="component" value="Chromosome"/>
</dbReference>
<dbReference type="GO" id="GO:0008836">
    <property type="term" value="F:diaminopimelate decarboxylase activity"/>
    <property type="evidence" value="ECO:0007669"/>
    <property type="project" value="UniProtKB-UniRule"/>
</dbReference>
<dbReference type="GO" id="GO:0030170">
    <property type="term" value="F:pyridoxal phosphate binding"/>
    <property type="evidence" value="ECO:0007669"/>
    <property type="project" value="UniProtKB-UniRule"/>
</dbReference>
<dbReference type="GO" id="GO:0009089">
    <property type="term" value="P:lysine biosynthetic process via diaminopimelate"/>
    <property type="evidence" value="ECO:0007669"/>
    <property type="project" value="UniProtKB-UniRule"/>
</dbReference>
<dbReference type="CDD" id="cd06828">
    <property type="entry name" value="PLPDE_III_DapDC"/>
    <property type="match status" value="1"/>
</dbReference>
<dbReference type="FunFam" id="2.40.37.10:FF:000003">
    <property type="entry name" value="Diaminopimelate decarboxylase"/>
    <property type="match status" value="1"/>
</dbReference>
<dbReference type="FunFam" id="3.20.20.10:FF:000003">
    <property type="entry name" value="Diaminopimelate decarboxylase"/>
    <property type="match status" value="1"/>
</dbReference>
<dbReference type="Gene3D" id="3.20.20.10">
    <property type="entry name" value="Alanine racemase"/>
    <property type="match status" value="1"/>
</dbReference>
<dbReference type="Gene3D" id="2.40.37.10">
    <property type="entry name" value="Lyase, Ornithine Decarboxylase, Chain A, domain 1"/>
    <property type="match status" value="1"/>
</dbReference>
<dbReference type="HAMAP" id="MF_02120">
    <property type="entry name" value="LysA"/>
    <property type="match status" value="1"/>
</dbReference>
<dbReference type="InterPro" id="IPR009006">
    <property type="entry name" value="Ala_racemase/Decarboxylase_C"/>
</dbReference>
<dbReference type="InterPro" id="IPR002986">
    <property type="entry name" value="DAP_deCOOHase_LysA"/>
</dbReference>
<dbReference type="InterPro" id="IPR022643">
    <property type="entry name" value="De-COase2_C"/>
</dbReference>
<dbReference type="InterPro" id="IPR022657">
    <property type="entry name" value="De-COase2_CS"/>
</dbReference>
<dbReference type="InterPro" id="IPR022644">
    <property type="entry name" value="De-COase2_N"/>
</dbReference>
<dbReference type="InterPro" id="IPR022653">
    <property type="entry name" value="De-COase2_pyr-phos_BS"/>
</dbReference>
<dbReference type="InterPro" id="IPR000183">
    <property type="entry name" value="Orn/DAP/Arg_de-COase"/>
</dbReference>
<dbReference type="InterPro" id="IPR029066">
    <property type="entry name" value="PLP-binding_barrel"/>
</dbReference>
<dbReference type="NCBIfam" id="TIGR01048">
    <property type="entry name" value="lysA"/>
    <property type="match status" value="1"/>
</dbReference>
<dbReference type="PANTHER" id="PTHR43727">
    <property type="entry name" value="DIAMINOPIMELATE DECARBOXYLASE"/>
    <property type="match status" value="1"/>
</dbReference>
<dbReference type="PANTHER" id="PTHR43727:SF2">
    <property type="entry name" value="GROUP IV DECARBOXYLASE"/>
    <property type="match status" value="1"/>
</dbReference>
<dbReference type="Pfam" id="PF02784">
    <property type="entry name" value="Orn_Arg_deC_N"/>
    <property type="match status" value="1"/>
</dbReference>
<dbReference type="Pfam" id="PF00278">
    <property type="entry name" value="Orn_DAP_Arg_deC"/>
    <property type="match status" value="1"/>
</dbReference>
<dbReference type="PRINTS" id="PR01181">
    <property type="entry name" value="DAPDCRBXLASE"/>
</dbReference>
<dbReference type="PRINTS" id="PR01179">
    <property type="entry name" value="ODADCRBXLASE"/>
</dbReference>
<dbReference type="SUPFAM" id="SSF50621">
    <property type="entry name" value="Alanine racemase C-terminal domain-like"/>
    <property type="match status" value="1"/>
</dbReference>
<dbReference type="SUPFAM" id="SSF51419">
    <property type="entry name" value="PLP-binding barrel"/>
    <property type="match status" value="1"/>
</dbReference>
<dbReference type="PROSITE" id="PS00878">
    <property type="entry name" value="ODR_DC_2_1"/>
    <property type="match status" value="1"/>
</dbReference>
<dbReference type="PROSITE" id="PS00879">
    <property type="entry name" value="ODR_DC_2_2"/>
    <property type="match status" value="1"/>
</dbReference>
<proteinExistence type="inferred from homology"/>
<keyword id="KW-0028">Amino-acid biosynthesis</keyword>
<keyword id="KW-0210">Decarboxylase</keyword>
<keyword id="KW-0456">Lyase</keyword>
<keyword id="KW-0457">Lysine biosynthesis</keyword>
<keyword id="KW-0663">Pyridoxal phosphate</keyword>
<keyword id="KW-1185">Reference proteome</keyword>
<gene>
    <name evidence="2" type="primary">lysA</name>
    <name type="ordered locus">AF_0800</name>
</gene>
<organism>
    <name type="scientific">Archaeoglobus fulgidus (strain ATCC 49558 / DSM 4304 / JCM 9628 / NBRC 100126 / VC-16)</name>
    <dbReference type="NCBI Taxonomy" id="224325"/>
    <lineage>
        <taxon>Archaea</taxon>
        <taxon>Methanobacteriati</taxon>
        <taxon>Methanobacteriota</taxon>
        <taxon>Archaeoglobi</taxon>
        <taxon>Archaeoglobales</taxon>
        <taxon>Archaeoglobaceae</taxon>
        <taxon>Archaeoglobus</taxon>
    </lineage>
</organism>
<name>DCDA_ARCFU</name>
<evidence type="ECO:0000255" key="1"/>
<evidence type="ECO:0000255" key="2">
    <source>
        <dbReference type="HAMAP-Rule" id="MF_02120"/>
    </source>
</evidence>
<feature type="chain" id="PRO_0000149940" description="Diaminopimelate decarboxylase">
    <location>
        <begin position="1"/>
        <end position="419"/>
    </location>
</feature>
<feature type="active site" description="Proton donor" evidence="1">
    <location>
        <position position="343"/>
    </location>
</feature>
<feature type="binding site" evidence="2">
    <location>
        <position position="234"/>
    </location>
    <ligand>
        <name>pyridoxal 5'-phosphate</name>
        <dbReference type="ChEBI" id="CHEBI:597326"/>
    </ligand>
</feature>
<feature type="binding site" evidence="2">
    <location>
        <begin position="274"/>
        <end position="277"/>
    </location>
    <ligand>
        <name>pyridoxal 5'-phosphate</name>
        <dbReference type="ChEBI" id="CHEBI:597326"/>
    </ligand>
</feature>
<feature type="binding site" evidence="2">
    <location>
        <position position="277"/>
    </location>
    <ligand>
        <name>substrate</name>
    </ligand>
</feature>
<feature type="binding site" evidence="2">
    <location>
        <position position="312"/>
    </location>
    <ligand>
        <name>substrate</name>
    </ligand>
</feature>
<feature type="binding site" evidence="2">
    <location>
        <position position="316"/>
    </location>
    <ligand>
        <name>substrate</name>
    </ligand>
</feature>
<feature type="binding site" evidence="2">
    <location>
        <position position="344"/>
    </location>
    <ligand>
        <name>substrate</name>
    </ligand>
</feature>
<feature type="binding site" evidence="2">
    <location>
        <position position="372"/>
    </location>
    <ligand>
        <name>pyridoxal 5'-phosphate</name>
        <dbReference type="ChEBI" id="CHEBI:597326"/>
    </ligand>
</feature>
<feature type="binding site" evidence="2">
    <location>
        <position position="372"/>
    </location>
    <ligand>
        <name>substrate</name>
    </ligand>
</feature>
<feature type="modified residue" description="N6-(pyridoxal phosphate)lysine" evidence="2">
    <location>
        <position position="56"/>
    </location>
</feature>
<comment type="function">
    <text evidence="2">Specifically catalyzes the decarboxylation of meso-diaminopimelate (meso-DAP) to L-lysine.</text>
</comment>
<comment type="catalytic activity">
    <reaction evidence="2">
        <text>meso-2,6-diaminopimelate + H(+) = L-lysine + CO2</text>
        <dbReference type="Rhea" id="RHEA:15101"/>
        <dbReference type="ChEBI" id="CHEBI:15378"/>
        <dbReference type="ChEBI" id="CHEBI:16526"/>
        <dbReference type="ChEBI" id="CHEBI:32551"/>
        <dbReference type="ChEBI" id="CHEBI:57791"/>
        <dbReference type="EC" id="4.1.1.20"/>
    </reaction>
</comment>
<comment type="cofactor">
    <cofactor evidence="2">
        <name>pyridoxal 5'-phosphate</name>
        <dbReference type="ChEBI" id="CHEBI:597326"/>
    </cofactor>
</comment>
<comment type="pathway">
    <text evidence="2">Amino-acid biosynthesis; L-lysine biosynthesis via DAP pathway; L-lysine from DL-2,6-diaminopimelate: step 1/1.</text>
</comment>
<comment type="subunit">
    <text evidence="2">Homodimer.</text>
</comment>
<comment type="similarity">
    <text evidence="2">Belongs to the Orn/Lys/Arg decarboxylase class-II family. LysA subfamily.</text>
</comment>
<accession>O29458</accession>
<protein>
    <recommendedName>
        <fullName evidence="2">Diaminopimelate decarboxylase</fullName>
        <shortName evidence="2">DAP decarboxylase</shortName>
        <shortName evidence="2">DAPDC</shortName>
        <ecNumber evidence="2">4.1.1.20</ecNumber>
    </recommendedName>
</protein>